<protein>
    <recommendedName>
        <fullName>Uptake hydrogenase small subunit</fullName>
        <ecNumber>1.12.99.6</ecNumber>
    </recommendedName>
    <alternativeName>
        <fullName>Hydrogenlyase</fullName>
    </alternativeName>
    <alternativeName>
        <fullName>Membrane-bound hydrogenase small subunit</fullName>
    </alternativeName>
</protein>
<gene>
    <name type="primary">hupA</name>
    <name type="synonym">hupS</name>
</gene>
<keyword id="KW-0003">3Fe-4S</keyword>
<keyword id="KW-0004">4Fe-4S</keyword>
<keyword id="KW-1003">Cell membrane</keyword>
<keyword id="KW-0408">Iron</keyword>
<keyword id="KW-0411">Iron-sulfur</keyword>
<keyword id="KW-0472">Membrane</keyword>
<keyword id="KW-0479">Metal-binding</keyword>
<keyword id="KW-0560">Oxidoreductase</keyword>
<keyword id="KW-0732">Signal</keyword>
<organism>
    <name type="scientific">Rhodobacter capsulatus</name>
    <name type="common">Rhodopseudomonas capsulata</name>
    <dbReference type="NCBI Taxonomy" id="1061"/>
    <lineage>
        <taxon>Bacteria</taxon>
        <taxon>Pseudomonadati</taxon>
        <taxon>Pseudomonadota</taxon>
        <taxon>Alphaproteobacteria</taxon>
        <taxon>Rhodobacterales</taxon>
        <taxon>Rhodobacter group</taxon>
        <taxon>Rhodobacter</taxon>
    </lineage>
</organism>
<reference key="1">
    <citation type="journal article" date="1988" name="Mol. Gen. Genet.">
        <title>Cloning and sequencing of the genes encoding the large and the small subunits of the H2 uptake hydrogenase (hup) of Rhodobacter capsulatus.</title>
        <authorList>
            <person name="Leclerc M."/>
            <person name="Colbeau A."/>
            <person name="Cauvin B."/>
            <person name="Vignais P.M."/>
        </authorList>
    </citation>
    <scope>NUCLEOTIDE SEQUENCE [GENOMIC DNA]</scope>
    <source>
        <strain>ATCC 33303 / B10</strain>
    </source>
</reference>
<reference key="2">
    <citation type="journal article" date="1989" name="Mol. Gen. Genet.">
        <authorList>
            <person name="Leclerc M."/>
            <person name="Colbeau A."/>
            <person name="Cauvin B."/>
            <person name="Vignais P.M."/>
        </authorList>
    </citation>
    <scope>ERRATUM OF PUBMED:3067084</scope>
    <scope>SEQUENCE REVISION</scope>
</reference>
<reference key="3">
    <citation type="journal article" date="1993" name="Mol. Microbiol.">
        <title>Organization of the genes necessary for hydrogenase expression in Rhodobacter capsulatus. Sequence analysis and identification of two hyp regulatory mutants.</title>
        <authorList>
            <person name="Colbeau A."/>
            <person name="Richaud P."/>
            <person name="Toussaint B."/>
            <person name="Caballero F.J."/>
            <person name="Elster C."/>
            <person name="Delphin C."/>
            <person name="Smith R.L."/>
            <person name="Chabert J."/>
            <person name="Vignais P.M."/>
        </authorList>
    </citation>
    <scope>NUCLEOTIDE SEQUENCE [GENOMIC DNA] OF 1-18</scope>
    <source>
        <strain>ATCC 33303 / B10</strain>
    </source>
</reference>
<proteinExistence type="inferred from homology"/>
<evidence type="ECO:0000250" key="1">
    <source>
        <dbReference type="UniProtKB" id="P21853"/>
    </source>
</evidence>
<evidence type="ECO:0000305" key="2"/>
<sequence>MSDIETFYDVMRRQGITRRSFMKSVRSPQHVLGLGPSFVPKIGEAMETKPRTPVVWVHGLECTCCSESFIRSAHPLAKDVVLSMISLDYDDTLMAAAGHAAEAAFEETIAKYKGNYILAVEGNPPLNEDGMFCITGGKPFVEKLRHAAEGAKAIISWGACASYGCVQAAAPNPTQATPVHKVITDKPIIKVPGCPPIAEVMTGVITYMLTFDRMPELDRQGRPAMFYSQRIHDKCYRRPHFDAGQFVEHWDDENARKGYCLYKMGCKGPTTYNACSTVPLERRRHFPIQSGHGCIGCSEDGFWDQGSFYDRLTTIKQFGIEATADQIGWTATGLVGAAVAAHAAVSVLKRAQKKNEEA</sequence>
<feature type="signal peptide">
    <location>
        <begin position="1"/>
        <end position="45"/>
    </location>
</feature>
<feature type="chain" id="PRO_0000013435" description="Uptake hydrogenase small subunit">
    <location>
        <begin position="46"/>
        <end position="358"/>
    </location>
</feature>
<feature type="binding site" evidence="1">
    <location>
        <position position="62"/>
    </location>
    <ligand>
        <name>[4Fe-4S] cluster</name>
        <dbReference type="ChEBI" id="CHEBI:49883"/>
        <label>1</label>
    </ligand>
</feature>
<feature type="binding site" evidence="1">
    <location>
        <position position="65"/>
    </location>
    <ligand>
        <name>[4Fe-4S] cluster</name>
        <dbReference type="ChEBI" id="CHEBI:49883"/>
        <label>1</label>
    </ligand>
</feature>
<feature type="binding site" evidence="1">
    <location>
        <position position="160"/>
    </location>
    <ligand>
        <name>[4Fe-4S] cluster</name>
        <dbReference type="ChEBI" id="CHEBI:49883"/>
        <label>1</label>
    </ligand>
</feature>
<feature type="binding site" evidence="1">
    <location>
        <position position="194"/>
    </location>
    <ligand>
        <name>[4Fe-4S] cluster</name>
        <dbReference type="ChEBI" id="CHEBI:49883"/>
        <label>1</label>
    </ligand>
</feature>
<feature type="binding site" evidence="1">
    <location>
        <position position="232"/>
    </location>
    <ligand>
        <name>[4Fe-4S] cluster</name>
        <dbReference type="ChEBI" id="CHEBI:49883"/>
        <label>2</label>
    </ligand>
</feature>
<feature type="binding site" evidence="1">
    <location>
        <position position="235"/>
    </location>
    <ligand>
        <name>[4Fe-4S] cluster</name>
        <dbReference type="ChEBI" id="CHEBI:49883"/>
        <label>2</label>
    </ligand>
</feature>
<feature type="binding site" evidence="1">
    <location>
        <position position="260"/>
    </location>
    <ligand>
        <name>[4Fe-4S] cluster</name>
        <dbReference type="ChEBI" id="CHEBI:49883"/>
        <label>2</label>
    </ligand>
</feature>
<feature type="binding site" evidence="1">
    <location>
        <position position="266"/>
    </location>
    <ligand>
        <name>[4Fe-4S] cluster</name>
        <dbReference type="ChEBI" id="CHEBI:49883"/>
        <label>2</label>
    </ligand>
</feature>
<feature type="binding site" evidence="1">
    <location>
        <position position="275"/>
    </location>
    <ligand>
        <name>[3Fe-4S] cluster</name>
        <dbReference type="ChEBI" id="CHEBI:21137"/>
    </ligand>
</feature>
<feature type="binding site" evidence="1">
    <location>
        <position position="294"/>
    </location>
    <ligand>
        <name>[3Fe-4S] cluster</name>
        <dbReference type="ChEBI" id="CHEBI:21137"/>
    </ligand>
</feature>
<feature type="binding site" evidence="1">
    <location>
        <position position="297"/>
    </location>
    <ligand>
        <name>[3Fe-4S] cluster</name>
        <dbReference type="ChEBI" id="CHEBI:21137"/>
    </ligand>
</feature>
<dbReference type="EC" id="1.12.99.6"/>
<dbReference type="EMBL" id="X13520">
    <property type="protein sequence ID" value="CAA31869.1"/>
    <property type="status" value="ALT_SEQ"/>
    <property type="molecule type" value="Genomic_DNA"/>
</dbReference>
<dbReference type="EMBL" id="M37261">
    <property type="protein sequence ID" value="AAA69668.1"/>
    <property type="status" value="ALT_TERM"/>
    <property type="molecule type" value="Genomic_DNA"/>
</dbReference>
<dbReference type="PIR" id="S08316">
    <property type="entry name" value="S08316"/>
</dbReference>
<dbReference type="SMR" id="P15283"/>
<dbReference type="GO" id="GO:0044569">
    <property type="term" value="C:[Ni-Fe] hydrogenase complex"/>
    <property type="evidence" value="ECO:0007669"/>
    <property type="project" value="TreeGrafter"/>
</dbReference>
<dbReference type="GO" id="GO:0009375">
    <property type="term" value="C:ferredoxin hydrogenase complex"/>
    <property type="evidence" value="ECO:0007669"/>
    <property type="project" value="InterPro"/>
</dbReference>
<dbReference type="GO" id="GO:0005886">
    <property type="term" value="C:plasma membrane"/>
    <property type="evidence" value="ECO:0007669"/>
    <property type="project" value="UniProtKB-SubCell"/>
</dbReference>
<dbReference type="GO" id="GO:0051538">
    <property type="term" value="F:3 iron, 4 sulfur cluster binding"/>
    <property type="evidence" value="ECO:0007669"/>
    <property type="project" value="UniProtKB-KW"/>
</dbReference>
<dbReference type="GO" id="GO:0051539">
    <property type="term" value="F:4 iron, 4 sulfur cluster binding"/>
    <property type="evidence" value="ECO:0007669"/>
    <property type="project" value="UniProtKB-KW"/>
</dbReference>
<dbReference type="GO" id="GO:0009055">
    <property type="term" value="F:electron transfer activity"/>
    <property type="evidence" value="ECO:0007669"/>
    <property type="project" value="TreeGrafter"/>
</dbReference>
<dbReference type="GO" id="GO:0008901">
    <property type="term" value="F:ferredoxin hydrogenase activity"/>
    <property type="evidence" value="ECO:0007669"/>
    <property type="project" value="InterPro"/>
</dbReference>
<dbReference type="GO" id="GO:0033748">
    <property type="term" value="F:hydrogenase (acceptor) activity"/>
    <property type="evidence" value="ECO:0007669"/>
    <property type="project" value="UniProtKB-EC"/>
</dbReference>
<dbReference type="GO" id="GO:0046872">
    <property type="term" value="F:metal ion binding"/>
    <property type="evidence" value="ECO:0007669"/>
    <property type="project" value="UniProtKB-KW"/>
</dbReference>
<dbReference type="GO" id="GO:0009061">
    <property type="term" value="P:anaerobic respiration"/>
    <property type="evidence" value="ECO:0007669"/>
    <property type="project" value="TreeGrafter"/>
</dbReference>
<dbReference type="Gene3D" id="4.10.480.10">
    <property type="entry name" value="Cytochrome-c3 hydrogenase, C-terminal domain"/>
    <property type="match status" value="1"/>
</dbReference>
<dbReference type="Gene3D" id="3.40.50.700">
    <property type="entry name" value="NADH:ubiquinone oxidoreductase-like, 20kDa subunit"/>
    <property type="match status" value="1"/>
</dbReference>
<dbReference type="InterPro" id="IPR027394">
    <property type="entry name" value="Cytochrome-c3_hydrogenase_C"/>
</dbReference>
<dbReference type="InterPro" id="IPR006137">
    <property type="entry name" value="NADH_UbQ_OxRdtase-like_20kDa"/>
</dbReference>
<dbReference type="InterPro" id="IPR037148">
    <property type="entry name" value="NiFe-Hase_small_C_sf"/>
</dbReference>
<dbReference type="InterPro" id="IPR037024">
    <property type="entry name" value="NiFe_Hase_small_N_sf"/>
</dbReference>
<dbReference type="InterPro" id="IPR001821">
    <property type="entry name" value="NiFe_hydrogenase_ssu"/>
</dbReference>
<dbReference type="NCBIfam" id="TIGR00391">
    <property type="entry name" value="hydA"/>
    <property type="match status" value="1"/>
</dbReference>
<dbReference type="PANTHER" id="PTHR30013:SF6">
    <property type="entry name" value="HYDROGENASE-1 SMALL CHAIN"/>
    <property type="match status" value="1"/>
</dbReference>
<dbReference type="PANTHER" id="PTHR30013">
    <property type="entry name" value="NIFE / NIFESE HYDROGENASE SMALL SUBUNIT FAMILY MEMBER"/>
    <property type="match status" value="1"/>
</dbReference>
<dbReference type="Pfam" id="PF14720">
    <property type="entry name" value="NiFe_hyd_SSU_C"/>
    <property type="match status" value="1"/>
</dbReference>
<dbReference type="Pfam" id="PF01058">
    <property type="entry name" value="Oxidored_q6"/>
    <property type="match status" value="1"/>
</dbReference>
<dbReference type="PIRSF" id="PIRSF000310">
    <property type="entry name" value="NiFe_hyd_ssu"/>
    <property type="match status" value="1"/>
</dbReference>
<dbReference type="PRINTS" id="PR00614">
    <property type="entry name" value="NIHGNASESMLL"/>
</dbReference>
<dbReference type="SUPFAM" id="SSF56770">
    <property type="entry name" value="HydA/Nqo6-like"/>
    <property type="match status" value="1"/>
</dbReference>
<accession>P15283</accession>
<comment type="function">
    <text>This enzyme recycles the H(2) produced by nitrogenase to increase the production of ATP and to protect nitrogenase against inhibition or damage by O(2) under carbon- or phosphate-limited conditions.</text>
</comment>
<comment type="catalytic activity">
    <reaction>
        <text>H2 + A = AH2</text>
        <dbReference type="Rhea" id="RHEA:12116"/>
        <dbReference type="ChEBI" id="CHEBI:13193"/>
        <dbReference type="ChEBI" id="CHEBI:17499"/>
        <dbReference type="ChEBI" id="CHEBI:18276"/>
        <dbReference type="EC" id="1.12.99.6"/>
    </reaction>
</comment>
<comment type="cofactor">
    <cofactor evidence="1">
        <name>[4Fe-4S] cluster</name>
        <dbReference type="ChEBI" id="CHEBI:49883"/>
    </cofactor>
    <text evidence="1">Binds 2 [4Fe-4S] clusters.</text>
</comment>
<comment type="cofactor">
    <cofactor evidence="1">
        <name>[3Fe-4S] cluster</name>
        <dbReference type="ChEBI" id="CHEBI:21137"/>
    </cofactor>
    <text evidence="1">Binds 1 [3Fe-4S] cluster.</text>
</comment>
<comment type="subunit">
    <text>Heterodimer of a large and a small subunit.</text>
</comment>
<comment type="subcellular location">
    <subcellularLocation>
        <location>Cell membrane</location>
        <topology>Peripheral membrane protein</topology>
    </subcellularLocation>
</comment>
<comment type="similarity">
    <text evidence="2">Belongs to the [NiFe]/[NiFeSe] hydrogenase small subunit family.</text>
</comment>
<name>MBHS_RHOCA</name>